<reference key="1">
    <citation type="submission" date="2009-07" db="EMBL/GenBank/DDBJ databases">
        <title>Complete sequence of Pectobacterium carotovorum subsp. carotovorum PC1.</title>
        <authorList>
            <consortium name="US DOE Joint Genome Institute"/>
            <person name="Lucas S."/>
            <person name="Copeland A."/>
            <person name="Lapidus A."/>
            <person name="Glavina del Rio T."/>
            <person name="Tice H."/>
            <person name="Bruce D."/>
            <person name="Goodwin L."/>
            <person name="Pitluck S."/>
            <person name="Munk A.C."/>
            <person name="Brettin T."/>
            <person name="Detter J.C."/>
            <person name="Han C."/>
            <person name="Tapia R."/>
            <person name="Larimer F."/>
            <person name="Land M."/>
            <person name="Hauser L."/>
            <person name="Kyrpides N."/>
            <person name="Mikhailova N."/>
            <person name="Balakrishnan V."/>
            <person name="Glasner J."/>
            <person name="Perna N.T."/>
        </authorList>
    </citation>
    <scope>NUCLEOTIDE SEQUENCE [LARGE SCALE GENOMIC DNA]</scope>
    <source>
        <strain>PC1</strain>
    </source>
</reference>
<proteinExistence type="inferred from homology"/>
<evidence type="ECO:0000255" key="1">
    <source>
        <dbReference type="HAMAP-Rule" id="MF_01202"/>
    </source>
</evidence>
<gene>
    <name evidence="1" type="primary">dadA</name>
    <name type="ordered locus">PC1_1957</name>
</gene>
<keyword id="KW-0274">FAD</keyword>
<keyword id="KW-0285">Flavoprotein</keyword>
<keyword id="KW-0560">Oxidoreductase</keyword>
<dbReference type="EC" id="1.4.99.-" evidence="1"/>
<dbReference type="EMBL" id="CP001657">
    <property type="protein sequence ID" value="ACT12998.1"/>
    <property type="molecule type" value="Genomic_DNA"/>
</dbReference>
<dbReference type="RefSeq" id="WP_015840191.1">
    <property type="nucleotide sequence ID" value="NC_012917.1"/>
</dbReference>
<dbReference type="SMR" id="C6DGU9"/>
<dbReference type="STRING" id="561230.PC1_1957"/>
<dbReference type="KEGG" id="pct:PC1_1957"/>
<dbReference type="eggNOG" id="COG0665">
    <property type="taxonomic scope" value="Bacteria"/>
</dbReference>
<dbReference type="HOGENOM" id="CLU_007884_9_2_6"/>
<dbReference type="OrthoDB" id="9805337at2"/>
<dbReference type="UniPathway" id="UPA00043">
    <property type="reaction ID" value="UER00498"/>
</dbReference>
<dbReference type="Proteomes" id="UP000002736">
    <property type="component" value="Chromosome"/>
</dbReference>
<dbReference type="GO" id="GO:0005737">
    <property type="term" value="C:cytoplasm"/>
    <property type="evidence" value="ECO:0007669"/>
    <property type="project" value="TreeGrafter"/>
</dbReference>
<dbReference type="GO" id="GO:0005886">
    <property type="term" value="C:plasma membrane"/>
    <property type="evidence" value="ECO:0007669"/>
    <property type="project" value="TreeGrafter"/>
</dbReference>
<dbReference type="GO" id="GO:0008718">
    <property type="term" value="F:D-amino-acid dehydrogenase activity"/>
    <property type="evidence" value="ECO:0007669"/>
    <property type="project" value="UniProtKB-UniRule"/>
</dbReference>
<dbReference type="GO" id="GO:0055130">
    <property type="term" value="P:D-alanine catabolic process"/>
    <property type="evidence" value="ECO:0007669"/>
    <property type="project" value="UniProtKB-UniPathway"/>
</dbReference>
<dbReference type="FunFam" id="3.50.50.60:FF:000020">
    <property type="entry name" value="D-amino acid dehydrogenase"/>
    <property type="match status" value="1"/>
</dbReference>
<dbReference type="Gene3D" id="3.30.9.10">
    <property type="entry name" value="D-Amino Acid Oxidase, subunit A, domain 2"/>
    <property type="match status" value="1"/>
</dbReference>
<dbReference type="Gene3D" id="3.50.50.60">
    <property type="entry name" value="FAD/NAD(P)-binding domain"/>
    <property type="match status" value="2"/>
</dbReference>
<dbReference type="HAMAP" id="MF_01202">
    <property type="entry name" value="DadA"/>
    <property type="match status" value="1"/>
</dbReference>
<dbReference type="InterPro" id="IPR023080">
    <property type="entry name" value="DadA"/>
</dbReference>
<dbReference type="InterPro" id="IPR006076">
    <property type="entry name" value="FAD-dep_OxRdtase"/>
</dbReference>
<dbReference type="InterPro" id="IPR036188">
    <property type="entry name" value="FAD/NAD-bd_sf"/>
</dbReference>
<dbReference type="NCBIfam" id="NF001933">
    <property type="entry name" value="PRK00711.1"/>
    <property type="match status" value="1"/>
</dbReference>
<dbReference type="PANTHER" id="PTHR13847:SF280">
    <property type="entry name" value="D-AMINO ACID DEHYDROGENASE"/>
    <property type="match status" value="1"/>
</dbReference>
<dbReference type="PANTHER" id="PTHR13847">
    <property type="entry name" value="SARCOSINE DEHYDROGENASE-RELATED"/>
    <property type="match status" value="1"/>
</dbReference>
<dbReference type="Pfam" id="PF01266">
    <property type="entry name" value="DAO"/>
    <property type="match status" value="1"/>
</dbReference>
<dbReference type="SUPFAM" id="SSF54373">
    <property type="entry name" value="FAD-linked reductases, C-terminal domain"/>
    <property type="match status" value="1"/>
</dbReference>
<dbReference type="SUPFAM" id="SSF51905">
    <property type="entry name" value="FAD/NAD(P)-binding domain"/>
    <property type="match status" value="1"/>
</dbReference>
<name>DADA_PECCP</name>
<protein>
    <recommendedName>
        <fullName evidence="1">D-amino acid dehydrogenase</fullName>
        <ecNumber evidence="1">1.4.99.-</ecNumber>
    </recommendedName>
</protein>
<sequence length="417" mass="46153">MRVVILGSGVVGVSTAWYLAQEGHDVTVIDRQPEPALETSAGNAGQISPGYAAPWAAPGIPLKAIKWMFQRHAPLAIRPDFTAAQLCWMWQMLLNCDARHYKTNKARMVRLAEYSRDCLQQLRRDTGIQYEGRQGGTLQLFRTEQQYDNATRDIAVLEEAGVPYQLLTRHELASVEPALANVAEKLTGGLRLPHDETGDCQLFTRQLAAMAADAGVTFKLGRHVRQLRVEGQNVTGVQCDDEMIVADAYVMACGSYSTGLLRQWFDIPVYPLKGYSLTIPLADDASAPVSTVLDETYKVAITRFDRRIRVGGMAEVVGFNTDLNPKRRETLEMVVRDLYPHCGPIEQATFWTGLRPMTPDGTPLVGRSPLKNLYLNTGHGTLGWTMACGSGKLLADILSDKSPEIEANDLSVERYVR</sequence>
<feature type="chain" id="PRO_1000213848" description="D-amino acid dehydrogenase">
    <location>
        <begin position="1"/>
        <end position="417"/>
    </location>
</feature>
<feature type="binding site" evidence="1">
    <location>
        <begin position="3"/>
        <end position="17"/>
    </location>
    <ligand>
        <name>FAD</name>
        <dbReference type="ChEBI" id="CHEBI:57692"/>
    </ligand>
</feature>
<accession>C6DGU9</accession>
<organism>
    <name type="scientific">Pectobacterium carotovorum subsp. carotovorum (strain PC1)</name>
    <dbReference type="NCBI Taxonomy" id="561230"/>
    <lineage>
        <taxon>Bacteria</taxon>
        <taxon>Pseudomonadati</taxon>
        <taxon>Pseudomonadota</taxon>
        <taxon>Gammaproteobacteria</taxon>
        <taxon>Enterobacterales</taxon>
        <taxon>Pectobacteriaceae</taxon>
        <taxon>Pectobacterium</taxon>
    </lineage>
</organism>
<comment type="function">
    <text evidence="1">Oxidative deamination of D-amino acids.</text>
</comment>
<comment type="catalytic activity">
    <reaction evidence="1">
        <text>a D-alpha-amino acid + A + H2O = a 2-oxocarboxylate + AH2 + NH4(+)</text>
        <dbReference type="Rhea" id="RHEA:18125"/>
        <dbReference type="ChEBI" id="CHEBI:13193"/>
        <dbReference type="ChEBI" id="CHEBI:15377"/>
        <dbReference type="ChEBI" id="CHEBI:17499"/>
        <dbReference type="ChEBI" id="CHEBI:28938"/>
        <dbReference type="ChEBI" id="CHEBI:35179"/>
        <dbReference type="ChEBI" id="CHEBI:59871"/>
    </reaction>
</comment>
<comment type="cofactor">
    <cofactor evidence="1">
        <name>FAD</name>
        <dbReference type="ChEBI" id="CHEBI:57692"/>
    </cofactor>
</comment>
<comment type="pathway">
    <text>Amino-acid degradation; D-alanine degradation; NH(3) and pyruvate from D-alanine: step 1/1.</text>
</comment>
<comment type="similarity">
    <text evidence="1">Belongs to the DadA oxidoreductase family.</text>
</comment>